<proteinExistence type="inferred from homology"/>
<sequence>MKRIHLHLLSDSTGETLEMIAKAALAQFENADVVRHFWPMVRSRQHLERIVPELSNNPGLVLFTLVNAETRRALRDHCRRLSLPAVDALDEVTAALEVQLGQEAHGRPGRQHKMDEAYFKRVEAIQFTIAHDDGVGWENWEEADIVLAGVSRSSKTPTSIYLANRGYKVANIPLVMESPPPPALYELKNPMVVGLTTAPERLVQIRRNRLLTLNEQAETSYVEKDRVTEEVKFARRLFSDNNWPVIDVTRRSIEETAAAVIRLHNERHARVKPGEKPI</sequence>
<evidence type="ECO:0000255" key="1">
    <source>
        <dbReference type="HAMAP-Rule" id="MF_00921"/>
    </source>
</evidence>
<feature type="chain" id="PRO_0000316670" description="Putative pyruvate, phosphate dikinase regulatory protein">
    <location>
        <begin position="1"/>
        <end position="278"/>
    </location>
</feature>
<feature type="binding site" evidence="1">
    <location>
        <begin position="149"/>
        <end position="156"/>
    </location>
    <ligand>
        <name>ADP</name>
        <dbReference type="ChEBI" id="CHEBI:456216"/>
    </ligand>
</feature>
<protein>
    <recommendedName>
        <fullName evidence="1">Putative pyruvate, phosphate dikinase regulatory protein</fullName>
        <shortName evidence="1">PPDK regulatory protein</shortName>
        <ecNumber evidence="1">2.7.11.32</ecNumber>
        <ecNumber evidence="1">2.7.4.27</ecNumber>
    </recommendedName>
</protein>
<dbReference type="EC" id="2.7.11.32" evidence="1"/>
<dbReference type="EC" id="2.7.4.27" evidence="1"/>
<dbReference type="EMBL" id="CP000157">
    <property type="protein sequence ID" value="ABC64692.1"/>
    <property type="molecule type" value="Genomic_DNA"/>
</dbReference>
<dbReference type="RefSeq" id="WP_011415514.1">
    <property type="nucleotide sequence ID" value="NC_007722.1"/>
</dbReference>
<dbReference type="SMR" id="Q2N6J9"/>
<dbReference type="STRING" id="314225.ELI_13000"/>
<dbReference type="KEGG" id="eli:ELI_13000"/>
<dbReference type="eggNOG" id="COG1806">
    <property type="taxonomic scope" value="Bacteria"/>
</dbReference>
<dbReference type="HOGENOM" id="CLU_046206_2_0_5"/>
<dbReference type="OrthoDB" id="9782201at2"/>
<dbReference type="Proteomes" id="UP000008808">
    <property type="component" value="Chromosome"/>
</dbReference>
<dbReference type="GO" id="GO:0043531">
    <property type="term" value="F:ADP binding"/>
    <property type="evidence" value="ECO:0007669"/>
    <property type="project" value="UniProtKB-UniRule"/>
</dbReference>
<dbReference type="GO" id="GO:0005524">
    <property type="term" value="F:ATP binding"/>
    <property type="evidence" value="ECO:0007669"/>
    <property type="project" value="InterPro"/>
</dbReference>
<dbReference type="GO" id="GO:0016776">
    <property type="term" value="F:phosphotransferase activity, phosphate group as acceptor"/>
    <property type="evidence" value="ECO:0007669"/>
    <property type="project" value="UniProtKB-UniRule"/>
</dbReference>
<dbReference type="GO" id="GO:0004674">
    <property type="term" value="F:protein serine/threonine kinase activity"/>
    <property type="evidence" value="ECO:0007669"/>
    <property type="project" value="UniProtKB-UniRule"/>
</dbReference>
<dbReference type="HAMAP" id="MF_00921">
    <property type="entry name" value="PDRP"/>
    <property type="match status" value="1"/>
</dbReference>
<dbReference type="InterPro" id="IPR005177">
    <property type="entry name" value="Kinase-pyrophosphorylase"/>
</dbReference>
<dbReference type="InterPro" id="IPR026565">
    <property type="entry name" value="PPDK_reg"/>
</dbReference>
<dbReference type="NCBIfam" id="NF003742">
    <property type="entry name" value="PRK05339.1"/>
    <property type="match status" value="1"/>
</dbReference>
<dbReference type="PANTHER" id="PTHR31756">
    <property type="entry name" value="PYRUVATE, PHOSPHATE DIKINASE REGULATORY PROTEIN 1, CHLOROPLASTIC"/>
    <property type="match status" value="1"/>
</dbReference>
<dbReference type="PANTHER" id="PTHR31756:SF3">
    <property type="entry name" value="PYRUVATE, PHOSPHATE DIKINASE REGULATORY PROTEIN 1, CHLOROPLASTIC"/>
    <property type="match status" value="1"/>
</dbReference>
<dbReference type="Pfam" id="PF03618">
    <property type="entry name" value="Kinase-PPPase"/>
    <property type="match status" value="1"/>
</dbReference>
<accession>Q2N6J9</accession>
<gene>
    <name type="ordered locus">ELI_13000</name>
</gene>
<comment type="function">
    <text evidence="1">Bifunctional serine/threonine kinase and phosphorylase involved in the regulation of the pyruvate, phosphate dikinase (PPDK) by catalyzing its phosphorylation/dephosphorylation.</text>
</comment>
<comment type="catalytic activity">
    <reaction evidence="1">
        <text>N(tele)-phospho-L-histidyl/L-threonyl-[pyruvate, phosphate dikinase] + ADP = N(tele)-phospho-L-histidyl/O-phospho-L-threonyl-[pyruvate, phosphate dikinase] + AMP + H(+)</text>
        <dbReference type="Rhea" id="RHEA:43692"/>
        <dbReference type="Rhea" id="RHEA-COMP:10650"/>
        <dbReference type="Rhea" id="RHEA-COMP:10651"/>
        <dbReference type="ChEBI" id="CHEBI:15378"/>
        <dbReference type="ChEBI" id="CHEBI:30013"/>
        <dbReference type="ChEBI" id="CHEBI:61977"/>
        <dbReference type="ChEBI" id="CHEBI:83586"/>
        <dbReference type="ChEBI" id="CHEBI:456215"/>
        <dbReference type="ChEBI" id="CHEBI:456216"/>
        <dbReference type="EC" id="2.7.11.32"/>
    </reaction>
</comment>
<comment type="catalytic activity">
    <reaction evidence="1">
        <text>N(tele)-phospho-L-histidyl/O-phospho-L-threonyl-[pyruvate, phosphate dikinase] + phosphate + H(+) = N(tele)-phospho-L-histidyl/L-threonyl-[pyruvate, phosphate dikinase] + diphosphate</text>
        <dbReference type="Rhea" id="RHEA:43696"/>
        <dbReference type="Rhea" id="RHEA-COMP:10650"/>
        <dbReference type="Rhea" id="RHEA-COMP:10651"/>
        <dbReference type="ChEBI" id="CHEBI:15378"/>
        <dbReference type="ChEBI" id="CHEBI:30013"/>
        <dbReference type="ChEBI" id="CHEBI:33019"/>
        <dbReference type="ChEBI" id="CHEBI:43474"/>
        <dbReference type="ChEBI" id="CHEBI:61977"/>
        <dbReference type="ChEBI" id="CHEBI:83586"/>
        <dbReference type="EC" id="2.7.4.27"/>
    </reaction>
</comment>
<comment type="similarity">
    <text evidence="1">Belongs to the pyruvate, phosphate/water dikinase regulatory protein family. PDRP subfamily.</text>
</comment>
<name>PDRP_ERYLH</name>
<reference key="1">
    <citation type="journal article" date="2009" name="J. Bacteriol.">
        <title>Complete genome sequence of Erythrobacter litoralis HTCC2594.</title>
        <authorList>
            <person name="Oh H.M."/>
            <person name="Giovannoni S.J."/>
            <person name="Ferriera S."/>
            <person name="Johnson J."/>
            <person name="Cho J.C."/>
        </authorList>
    </citation>
    <scope>NUCLEOTIDE SEQUENCE [LARGE SCALE GENOMIC DNA]</scope>
    <source>
        <strain>HTCC2594</strain>
    </source>
</reference>
<keyword id="KW-0418">Kinase</keyword>
<keyword id="KW-0547">Nucleotide-binding</keyword>
<keyword id="KW-1185">Reference proteome</keyword>
<keyword id="KW-0723">Serine/threonine-protein kinase</keyword>
<keyword id="KW-0808">Transferase</keyword>
<organism>
    <name type="scientific">Erythrobacter litoralis (strain HTCC2594)</name>
    <dbReference type="NCBI Taxonomy" id="314225"/>
    <lineage>
        <taxon>Bacteria</taxon>
        <taxon>Pseudomonadati</taxon>
        <taxon>Pseudomonadota</taxon>
        <taxon>Alphaproteobacteria</taxon>
        <taxon>Sphingomonadales</taxon>
        <taxon>Erythrobacteraceae</taxon>
        <taxon>Erythrobacter/Porphyrobacter group</taxon>
        <taxon>Erythrobacter</taxon>
    </lineage>
</organism>